<organism>
    <name type="scientific">Aliarcobacter butzleri (strain RM4018)</name>
    <name type="common">Arcobacter butzleri</name>
    <dbReference type="NCBI Taxonomy" id="367737"/>
    <lineage>
        <taxon>Bacteria</taxon>
        <taxon>Pseudomonadati</taxon>
        <taxon>Campylobacterota</taxon>
        <taxon>Epsilonproteobacteria</taxon>
        <taxon>Campylobacterales</taxon>
        <taxon>Arcobacteraceae</taxon>
        <taxon>Aliarcobacter</taxon>
    </lineage>
</organism>
<sequence length="171" mass="19088">MPLLDSFRVDHTIMPAPAVRVAKVMQTPKGDDITVFDLRFCVPNKSMMSEKGTHTLEHLFAGFIRNHLNSPTVEIIDVSPMGCRTGFYMSLIGTPSEQEVAVAWKKAMEDVLKVENQSDIPELNLYQCGTCAMHSLDEAKDIARDILKSQIGVMSNKELYLSEEKLKSLGN</sequence>
<feature type="chain" id="PRO_1000057603" description="S-ribosylhomocysteine lyase">
    <location>
        <begin position="1"/>
        <end position="171"/>
    </location>
</feature>
<feature type="binding site" evidence="1">
    <location>
        <position position="54"/>
    </location>
    <ligand>
        <name>Fe cation</name>
        <dbReference type="ChEBI" id="CHEBI:24875"/>
    </ligand>
</feature>
<feature type="binding site" evidence="1">
    <location>
        <position position="58"/>
    </location>
    <ligand>
        <name>Fe cation</name>
        <dbReference type="ChEBI" id="CHEBI:24875"/>
    </ligand>
</feature>
<feature type="binding site" evidence="1">
    <location>
        <position position="128"/>
    </location>
    <ligand>
        <name>Fe cation</name>
        <dbReference type="ChEBI" id="CHEBI:24875"/>
    </ligand>
</feature>
<gene>
    <name evidence="1" type="primary">luxS</name>
    <name type="ordered locus">Abu_0111</name>
</gene>
<evidence type="ECO:0000255" key="1">
    <source>
        <dbReference type="HAMAP-Rule" id="MF_00091"/>
    </source>
</evidence>
<accession>A8ER22</accession>
<dbReference type="EC" id="4.4.1.21" evidence="1"/>
<dbReference type="EMBL" id="CP000361">
    <property type="protein sequence ID" value="ABV66396.1"/>
    <property type="molecule type" value="Genomic_DNA"/>
</dbReference>
<dbReference type="RefSeq" id="WP_012012012.1">
    <property type="nucleotide sequence ID" value="NC_009850.1"/>
</dbReference>
<dbReference type="SMR" id="A8ER22"/>
<dbReference type="STRING" id="367737.Abu_0111"/>
<dbReference type="GeneID" id="24303704"/>
<dbReference type="KEGG" id="abu:Abu_0111"/>
<dbReference type="eggNOG" id="COG1854">
    <property type="taxonomic scope" value="Bacteria"/>
</dbReference>
<dbReference type="HOGENOM" id="CLU_107531_2_0_7"/>
<dbReference type="Proteomes" id="UP000001136">
    <property type="component" value="Chromosome"/>
</dbReference>
<dbReference type="GO" id="GO:0005506">
    <property type="term" value="F:iron ion binding"/>
    <property type="evidence" value="ECO:0007669"/>
    <property type="project" value="InterPro"/>
</dbReference>
<dbReference type="GO" id="GO:0043768">
    <property type="term" value="F:S-ribosylhomocysteine lyase activity"/>
    <property type="evidence" value="ECO:0007669"/>
    <property type="project" value="UniProtKB-UniRule"/>
</dbReference>
<dbReference type="GO" id="GO:0009372">
    <property type="term" value="P:quorum sensing"/>
    <property type="evidence" value="ECO:0007669"/>
    <property type="project" value="UniProtKB-UniRule"/>
</dbReference>
<dbReference type="Gene3D" id="3.30.1360.80">
    <property type="entry name" value="S-ribosylhomocysteinase (LuxS)"/>
    <property type="match status" value="1"/>
</dbReference>
<dbReference type="HAMAP" id="MF_00091">
    <property type="entry name" value="LuxS"/>
    <property type="match status" value="1"/>
</dbReference>
<dbReference type="InterPro" id="IPR037005">
    <property type="entry name" value="LuxS_sf"/>
</dbReference>
<dbReference type="InterPro" id="IPR011249">
    <property type="entry name" value="Metalloenz_LuxS/M16"/>
</dbReference>
<dbReference type="InterPro" id="IPR003815">
    <property type="entry name" value="S-ribosylhomocysteinase"/>
</dbReference>
<dbReference type="NCBIfam" id="NF002602">
    <property type="entry name" value="PRK02260.1-2"/>
    <property type="match status" value="1"/>
</dbReference>
<dbReference type="PANTHER" id="PTHR35799">
    <property type="entry name" value="S-RIBOSYLHOMOCYSTEINE LYASE"/>
    <property type="match status" value="1"/>
</dbReference>
<dbReference type="PANTHER" id="PTHR35799:SF1">
    <property type="entry name" value="S-RIBOSYLHOMOCYSTEINE LYASE"/>
    <property type="match status" value="1"/>
</dbReference>
<dbReference type="Pfam" id="PF02664">
    <property type="entry name" value="LuxS"/>
    <property type="match status" value="1"/>
</dbReference>
<dbReference type="PIRSF" id="PIRSF006160">
    <property type="entry name" value="AI2"/>
    <property type="match status" value="1"/>
</dbReference>
<dbReference type="PRINTS" id="PR01487">
    <property type="entry name" value="LUXSPROTEIN"/>
</dbReference>
<dbReference type="SUPFAM" id="SSF63411">
    <property type="entry name" value="LuxS/MPP-like metallohydrolase"/>
    <property type="match status" value="1"/>
</dbReference>
<reference key="1">
    <citation type="journal article" date="2007" name="PLoS ONE">
        <title>The complete genome sequence and analysis of the Epsilonproteobacterium Arcobacter butzleri.</title>
        <authorList>
            <person name="Miller W.G."/>
            <person name="Parker C.T."/>
            <person name="Rubenfield M."/>
            <person name="Mendz G.L."/>
            <person name="Woesten M.M.S.M."/>
            <person name="Ussery D.W."/>
            <person name="Stolz J.F."/>
            <person name="Binnewies T.T."/>
            <person name="Hallin P.F."/>
            <person name="Wang G."/>
            <person name="Malek J.A."/>
            <person name="Rogosin A."/>
            <person name="Stanker L.H."/>
            <person name="Mandrell R.E."/>
        </authorList>
    </citation>
    <scope>NUCLEOTIDE SEQUENCE [LARGE SCALE GENOMIC DNA]</scope>
    <source>
        <strain>RM4018</strain>
    </source>
</reference>
<proteinExistence type="inferred from homology"/>
<protein>
    <recommendedName>
        <fullName evidence="1">S-ribosylhomocysteine lyase</fullName>
        <ecNumber evidence="1">4.4.1.21</ecNumber>
    </recommendedName>
    <alternativeName>
        <fullName evidence="1">AI-2 synthesis protein</fullName>
    </alternativeName>
    <alternativeName>
        <fullName evidence="1">Autoinducer-2 production protein LuxS</fullName>
    </alternativeName>
</protein>
<name>LUXS_ALIB4</name>
<comment type="function">
    <text evidence="1">Involved in the synthesis of autoinducer 2 (AI-2) which is secreted by bacteria and is used to communicate both the cell density and the metabolic potential of the environment. The regulation of gene expression in response to changes in cell density is called quorum sensing. Catalyzes the transformation of S-ribosylhomocysteine (RHC) to homocysteine (HC) and 4,5-dihydroxy-2,3-pentadione (DPD).</text>
</comment>
<comment type="catalytic activity">
    <reaction evidence="1">
        <text>S-(5-deoxy-D-ribos-5-yl)-L-homocysteine = (S)-4,5-dihydroxypentane-2,3-dione + L-homocysteine</text>
        <dbReference type="Rhea" id="RHEA:17753"/>
        <dbReference type="ChEBI" id="CHEBI:29484"/>
        <dbReference type="ChEBI" id="CHEBI:58195"/>
        <dbReference type="ChEBI" id="CHEBI:58199"/>
        <dbReference type="EC" id="4.4.1.21"/>
    </reaction>
</comment>
<comment type="cofactor">
    <cofactor evidence="1">
        <name>Fe cation</name>
        <dbReference type="ChEBI" id="CHEBI:24875"/>
    </cofactor>
    <text evidence="1">Binds 1 Fe cation per subunit.</text>
</comment>
<comment type="subunit">
    <text evidence="1">Homodimer.</text>
</comment>
<comment type="similarity">
    <text evidence="1">Belongs to the LuxS family.</text>
</comment>
<keyword id="KW-0071">Autoinducer synthesis</keyword>
<keyword id="KW-0408">Iron</keyword>
<keyword id="KW-0456">Lyase</keyword>
<keyword id="KW-0479">Metal-binding</keyword>
<keyword id="KW-0673">Quorum sensing</keyword>
<keyword id="KW-1185">Reference proteome</keyword>